<name>GCH1L_STAAR</name>
<evidence type="ECO:0000250" key="1">
    <source>
        <dbReference type="UniProtKB" id="P67272"/>
    </source>
</evidence>
<evidence type="ECO:0000305" key="2"/>
<proteinExistence type="inferred from homology"/>
<feature type="chain" id="PRO_0000147330" description="GTP cyclohydrolase 1 type 2 homolog">
    <location>
        <begin position="1"/>
        <end position="366"/>
    </location>
</feature>
<feature type="binding site" evidence="1">
    <location>
        <position position="64"/>
    </location>
    <ligand>
        <name>Zn(2+)</name>
        <dbReference type="ChEBI" id="CHEBI:29105"/>
        <label>1</label>
    </ligand>
</feature>
<feature type="binding site" evidence="1">
    <location>
        <position position="65"/>
    </location>
    <ligand>
        <name>Zn(2+)</name>
        <dbReference type="ChEBI" id="CHEBI:29105"/>
        <label>2</label>
    </ligand>
</feature>
<feature type="binding site" evidence="1">
    <location>
        <position position="102"/>
    </location>
    <ligand>
        <name>Zn(2+)</name>
        <dbReference type="ChEBI" id="CHEBI:29105"/>
        <label>1</label>
    </ligand>
</feature>
<feature type="binding site" evidence="1">
    <location>
        <position position="326"/>
    </location>
    <ligand>
        <name>Zn(2+)</name>
        <dbReference type="ChEBI" id="CHEBI:29105"/>
        <label>2</label>
    </ligand>
</feature>
<feature type="binding site" evidence="1">
    <location>
        <position position="329"/>
    </location>
    <ligand>
        <name>Zn(2+)</name>
        <dbReference type="ChEBI" id="CHEBI:29105"/>
        <label>1</label>
    </ligand>
</feature>
<feature type="binding site" evidence="1">
    <location>
        <position position="329"/>
    </location>
    <ligand>
        <name>Zn(2+)</name>
        <dbReference type="ChEBI" id="CHEBI:29105"/>
        <label>2</label>
    </ligand>
</feature>
<keyword id="KW-0479">Metal-binding</keyword>
<keyword id="KW-0862">Zinc</keyword>
<reference key="1">
    <citation type="journal article" date="2004" name="Proc. Natl. Acad. Sci. U.S.A.">
        <title>Complete genomes of two clinical Staphylococcus aureus strains: evidence for the rapid evolution of virulence and drug resistance.</title>
        <authorList>
            <person name="Holden M.T.G."/>
            <person name="Feil E.J."/>
            <person name="Lindsay J.A."/>
            <person name="Peacock S.J."/>
            <person name="Day N.P.J."/>
            <person name="Enright M.C."/>
            <person name="Foster T.J."/>
            <person name="Moore C.E."/>
            <person name="Hurst L."/>
            <person name="Atkin R."/>
            <person name="Barron A."/>
            <person name="Bason N."/>
            <person name="Bentley S.D."/>
            <person name="Chillingworth C."/>
            <person name="Chillingworth T."/>
            <person name="Churcher C."/>
            <person name="Clark L."/>
            <person name="Corton C."/>
            <person name="Cronin A."/>
            <person name="Doggett J."/>
            <person name="Dowd L."/>
            <person name="Feltwell T."/>
            <person name="Hance Z."/>
            <person name="Harris B."/>
            <person name="Hauser H."/>
            <person name="Holroyd S."/>
            <person name="Jagels K."/>
            <person name="James K.D."/>
            <person name="Lennard N."/>
            <person name="Line A."/>
            <person name="Mayes R."/>
            <person name="Moule S."/>
            <person name="Mungall K."/>
            <person name="Ormond D."/>
            <person name="Quail M.A."/>
            <person name="Rabbinowitsch E."/>
            <person name="Rutherford K.M."/>
            <person name="Sanders M."/>
            <person name="Sharp S."/>
            <person name="Simmonds M."/>
            <person name="Stevens K."/>
            <person name="Whitehead S."/>
            <person name="Barrell B.G."/>
            <person name="Spratt B.G."/>
            <person name="Parkhill J."/>
        </authorList>
    </citation>
    <scope>NUCLEOTIDE SEQUENCE [LARGE SCALE GENOMIC DNA]</scope>
    <source>
        <strain>MRSA252</strain>
    </source>
</reference>
<accession>Q6GGE0</accession>
<protein>
    <recommendedName>
        <fullName>GTP cyclohydrolase 1 type 2 homolog</fullName>
    </recommendedName>
</protein>
<organism>
    <name type="scientific">Staphylococcus aureus (strain MRSA252)</name>
    <dbReference type="NCBI Taxonomy" id="282458"/>
    <lineage>
        <taxon>Bacteria</taxon>
        <taxon>Bacillati</taxon>
        <taxon>Bacillota</taxon>
        <taxon>Bacilli</taxon>
        <taxon>Bacillales</taxon>
        <taxon>Staphylococcaceae</taxon>
        <taxon>Staphylococcus</taxon>
    </lineage>
</organism>
<sequence length="366" mass="41196">MKIADLMTLLDHHVPFRTAESWDNVGLLIGDEDVEVTGVLTALDCTLEVVNEAIEKGYNTIISHHPLIFKGVTSLKANGYGLIIRKLIQHDINLIAMHTNLDVNPHGVNMMLAKAMGLKNISIINNQQDVYYKVQTYIPKDNVGPFKDKLSENGLAQEGNYEYCFFESEGRGQFKPVGEANPTIGQIDKIEYVDEVKIEFMIDACQKSWAEQLIKQYHPYETPVFDFIEIKQTSLYGLGVMAEVDNQMTLEDFAANIKSKLNIPSVRFVGESNQKIKRIAIIGGSGIGYEYQAVQQGADVFVTGDIKHHDALDAKIHGVNLIDINHYSEYVMKEGLKTLLMNWFNTEKINIDVEASTINTDPFEYI</sequence>
<dbReference type="EMBL" id="BX571856">
    <property type="protein sequence ID" value="CAG40631.1"/>
    <property type="molecule type" value="Genomic_DNA"/>
</dbReference>
<dbReference type="RefSeq" id="WP_000683921.1">
    <property type="nucleotide sequence ID" value="NC_002952.2"/>
</dbReference>
<dbReference type="SMR" id="Q6GGE0"/>
<dbReference type="KEGG" id="sar:SAR1636"/>
<dbReference type="HOGENOM" id="CLU_037423_1_0_9"/>
<dbReference type="Proteomes" id="UP000000596">
    <property type="component" value="Chromosome"/>
</dbReference>
<dbReference type="GO" id="GO:0005737">
    <property type="term" value="C:cytoplasm"/>
    <property type="evidence" value="ECO:0007669"/>
    <property type="project" value="TreeGrafter"/>
</dbReference>
<dbReference type="GO" id="GO:0046872">
    <property type="term" value="F:metal ion binding"/>
    <property type="evidence" value="ECO:0007669"/>
    <property type="project" value="UniProtKB-KW"/>
</dbReference>
<dbReference type="FunFam" id="3.40.1390.30:FF:000001">
    <property type="entry name" value="GTP cyclohydrolase 1 type 2"/>
    <property type="match status" value="1"/>
</dbReference>
<dbReference type="FunFam" id="3.30.70.120:FF:000006">
    <property type="entry name" value="GTP cyclohydrolase 1 type 2 homolog"/>
    <property type="match status" value="1"/>
</dbReference>
<dbReference type="Gene3D" id="3.30.70.120">
    <property type="match status" value="1"/>
</dbReference>
<dbReference type="Gene3D" id="3.40.1390.30">
    <property type="entry name" value="NIF3 (NGG1p interacting factor 3)-like"/>
    <property type="match status" value="1"/>
</dbReference>
<dbReference type="InterPro" id="IPR002678">
    <property type="entry name" value="DUF34/NIF3"/>
</dbReference>
<dbReference type="InterPro" id="IPR017221">
    <property type="entry name" value="DUF34/NIF3_bac"/>
</dbReference>
<dbReference type="InterPro" id="IPR036069">
    <property type="entry name" value="DUF34/NIF3_sf"/>
</dbReference>
<dbReference type="InterPro" id="IPR015867">
    <property type="entry name" value="N-reg_PII/ATP_PRibTrfase_C"/>
</dbReference>
<dbReference type="NCBIfam" id="TIGR00486">
    <property type="entry name" value="YbgI_SA1388"/>
    <property type="match status" value="1"/>
</dbReference>
<dbReference type="PANTHER" id="PTHR13799:SF14">
    <property type="entry name" value="GTP CYCLOHYDROLASE 1 TYPE 2 HOMOLOG"/>
    <property type="match status" value="1"/>
</dbReference>
<dbReference type="PANTHER" id="PTHR13799">
    <property type="entry name" value="NGG1 INTERACTING FACTOR 3"/>
    <property type="match status" value="1"/>
</dbReference>
<dbReference type="Pfam" id="PF01784">
    <property type="entry name" value="DUF34_NIF3"/>
    <property type="match status" value="1"/>
</dbReference>
<dbReference type="PIRSF" id="PIRSF037489">
    <property type="entry name" value="UCP037489_NIF3_YqfO"/>
    <property type="match status" value="1"/>
</dbReference>
<dbReference type="SUPFAM" id="SSF102705">
    <property type="entry name" value="NIF3 (NGG1p interacting factor 3)-like"/>
    <property type="match status" value="1"/>
</dbReference>
<comment type="subunit">
    <text evidence="1">Homohexamer.</text>
</comment>
<comment type="similarity">
    <text evidence="2">Belongs to the GTP cyclohydrolase I type 2/NIF3 family.</text>
</comment>
<gene>
    <name type="ordered locus">SAR1636</name>
</gene>